<protein>
    <recommendedName>
        <fullName evidence="1">Capsid assembly scaffolding protein</fullName>
    </recommendedName>
    <alternativeName>
        <fullName evidence="1">Gene product 7</fullName>
        <shortName evidence="1">gp7</shortName>
    </alternativeName>
    <alternativeName>
        <fullName evidence="1">Head morphogenesis protein</fullName>
    </alternativeName>
    <alternativeName>
        <fullName evidence="1">Protein p7</fullName>
    </alternativeName>
    <alternativeName>
        <fullName evidence="1">Scaffold protein</fullName>
    </alternativeName>
</protein>
<gene>
    <name type="primary">7</name>
</gene>
<feature type="chain" id="PRO_0000106570" description="Capsid assembly scaffolding protein">
    <location>
        <begin position="1"/>
        <end position="101"/>
    </location>
</feature>
<feature type="region of interest" description="Disordered" evidence="3">
    <location>
        <begin position="1"/>
        <end position="24"/>
    </location>
</feature>
<feature type="coiled-coil region" evidence="2">
    <location>
        <begin position="79"/>
        <end position="99"/>
    </location>
</feature>
<reference key="1">
    <citation type="journal article" date="1997" name="Gene">
        <title>Bacteriophage B103: complete DNA sequence of its genome and relationship to other Bacillus phages.</title>
        <authorList>
            <person name="Pecenkova T."/>
            <person name="Benes V."/>
            <person name="Paces J."/>
            <person name="Vlcek C."/>
            <person name="Paces V."/>
        </authorList>
    </citation>
    <scope>NUCLEOTIDE SEQUENCE [LARGE SCALE GENOMIC DNA]</scope>
</reference>
<dbReference type="EMBL" id="X99260">
    <property type="protein sequence ID" value="CAA67654.1"/>
    <property type="molecule type" value="Genomic_DNA"/>
</dbReference>
<dbReference type="RefSeq" id="NP_690640.1">
    <property type="nucleotide sequence ID" value="NC_004165.1"/>
</dbReference>
<dbReference type="SMR" id="Q37887"/>
<dbReference type="KEGG" id="vg:955366"/>
<dbReference type="Proteomes" id="UP000000971">
    <property type="component" value="Segment"/>
</dbReference>
<dbReference type="Gene3D" id="1.20.5.400">
    <property type="match status" value="1"/>
</dbReference>
<dbReference type="InterPro" id="IPR038032">
    <property type="entry name" value="Gp7"/>
</dbReference>
<dbReference type="InterPro" id="IPR024374">
    <property type="entry name" value="Phage_phi-29_Gp7"/>
</dbReference>
<dbReference type="Pfam" id="PF11418">
    <property type="entry name" value="Scaffolding_pro"/>
    <property type="match status" value="1"/>
</dbReference>
<dbReference type="SUPFAM" id="SSF90246">
    <property type="entry name" value="Head morphogenesis protein gp7"/>
    <property type="match status" value="1"/>
</dbReference>
<name>SCAF_BPB03</name>
<proteinExistence type="inferred from homology"/>
<organismHost>
    <name type="scientific">Bacillus subtilis</name>
    <dbReference type="NCBI Taxonomy" id="1423"/>
</organismHost>
<keyword id="KW-0175">Coiled coil</keyword>
<keyword id="KW-0426">Late protein</keyword>
<keyword id="KW-0118">Viral capsid assembly</keyword>
<keyword id="KW-1188">Viral release from host cell</keyword>
<organism>
    <name type="scientific">Bacillus phage B103</name>
    <name type="common">Bacteriophage B103</name>
    <dbReference type="NCBI Taxonomy" id="2994042"/>
    <lineage>
        <taxon>Viruses</taxon>
        <taxon>Duplodnaviria</taxon>
        <taxon>Heunggongvirae</taxon>
        <taxon>Uroviricota</taxon>
        <taxon>Caudoviricetes</taxon>
        <taxon>Salasmaviridae</taxon>
        <taxon>Picovirinae</taxon>
        <taxon>Beecentumtrevirus</taxon>
        <taxon>Beecentumtrevirus B103</taxon>
    </lineage>
</organism>
<sequence length="101" mass="11704">MPMERDSHEEILNKLNDPELEHSERTELLQQLRADYGSVLSEFSELTSATEKLRAENSDLIVSNSKLFRQVGITKEKEEEIKQEELSETITIEDLEKQAQL</sequence>
<comment type="function">
    <text evidence="1">Scaffolding protein involved in the icosahedric procapsid assembly. Coassembles with the capsid proteins to form the procapsid. The scaffolding protein is found within the capsid as a serie of concentric shells. During DNA packaging, the scaffolding protein molecules are released from the procapsid.</text>
</comment>
<comment type="subunit">
    <text evidence="1">Homodimer. Interacts non-specifically with DNA; probably binds DNA in the early stages of DNA packaging.</text>
</comment>
<comment type="subcellular location">
    <text evidence="1">Present in about 147 copies in the prohead but not present in mature virions.</text>
</comment>
<comment type="similarity">
    <text evidence="4">Belongs to the phi29likevirus scaffolding protein family.</text>
</comment>
<evidence type="ECO:0000250" key="1">
    <source>
        <dbReference type="UniProtKB" id="P13848"/>
    </source>
</evidence>
<evidence type="ECO:0000255" key="2"/>
<evidence type="ECO:0000256" key="3">
    <source>
        <dbReference type="SAM" id="MobiDB-lite"/>
    </source>
</evidence>
<evidence type="ECO:0000305" key="4"/>
<accession>Q37887</accession>